<name>PSBA_NICTO</name>
<accession>Q33C59</accession>
<comment type="function">
    <text evidence="1">Photosystem II (PSII) is a light-driven water:plastoquinone oxidoreductase that uses light energy to abstract electrons from H(2)O, generating O(2) and a proton gradient subsequently used for ATP formation. It consists of a core antenna complex that captures photons, and an electron transfer chain that converts photonic excitation into a charge separation. The D1/D2 (PsbA/PsbD) reaction center heterodimer binds P680, the primary electron donor of PSII as well as several subsequent electron acceptors.</text>
</comment>
<comment type="catalytic activity">
    <reaction evidence="1">
        <text>2 a plastoquinone + 4 hnu + 2 H2O = 2 a plastoquinol + O2</text>
        <dbReference type="Rhea" id="RHEA:36359"/>
        <dbReference type="Rhea" id="RHEA-COMP:9561"/>
        <dbReference type="Rhea" id="RHEA-COMP:9562"/>
        <dbReference type="ChEBI" id="CHEBI:15377"/>
        <dbReference type="ChEBI" id="CHEBI:15379"/>
        <dbReference type="ChEBI" id="CHEBI:17757"/>
        <dbReference type="ChEBI" id="CHEBI:30212"/>
        <dbReference type="ChEBI" id="CHEBI:62192"/>
        <dbReference type="EC" id="1.10.3.9"/>
    </reaction>
</comment>
<comment type="cofactor">
    <text evidence="1">The D1/D2 heterodimer binds P680, chlorophylls that are the primary electron donor of PSII, and subsequent electron acceptors. It shares a non-heme iron and each subunit binds pheophytin, quinone, additional chlorophylls, carotenoids and lipids. D1 provides most of the ligands for the Mn4-Ca-O5 cluster of the oxygen-evolving complex (OEC). There is also a Cl(-1) ion associated with D1 and D2, which is required for oxygen evolution. The PSII complex binds additional chlorophylls, carotenoids and specific lipids.</text>
</comment>
<comment type="subunit">
    <text evidence="1">PSII is composed of 1 copy each of membrane proteins PsbA, PsbB, PsbC, PsbD, PsbE, PsbF, PsbH, PsbI, PsbJ, PsbK, PsbL, PsbM, PsbT, PsbX, PsbY, PsbZ, Psb30/Ycf12, at least 3 peripheral proteins of the oxygen-evolving complex and a large number of cofactors. It forms dimeric complexes.</text>
</comment>
<comment type="subcellular location">
    <subcellularLocation>
        <location evidence="1">Plastid</location>
        <location evidence="1">Chloroplast thylakoid membrane</location>
        <topology evidence="1">Multi-pass membrane protein</topology>
    </subcellularLocation>
</comment>
<comment type="PTM">
    <text evidence="1">Tyr-161 forms a radical intermediate that is referred to as redox-active TyrZ, YZ or Y-Z.</text>
</comment>
<comment type="PTM">
    <text evidence="1">C-terminally processed by CTPA; processing is essential to allow assembly of the oxygen-evolving complex and thus photosynthetic growth.</text>
</comment>
<comment type="miscellaneous">
    <text evidence="1">2 of the reaction center chlorophylls (ChlD1 and ChlD2) are entirely coordinated by water.</text>
</comment>
<comment type="miscellaneous">
    <text evidence="1">Herbicides such as atrazine, BNT, diuron or ioxynil bind in the Q(B) binding site and block subsequent electron transfer.</text>
</comment>
<comment type="similarity">
    <text evidence="1">Belongs to the reaction center PufL/M/PsbA/D family.</text>
</comment>
<reference key="1">
    <citation type="journal article" date="2006" name="Mol. Genet. Genomics">
        <title>The chloroplast genome of Nicotiana sylvestris and Nicotiana tomentosiformis: complete sequencing confirms that the Nicotiana sylvestris progenitor is the maternal genome donor of Nicotiana tabacum.</title>
        <authorList>
            <person name="Yukawa M."/>
            <person name="Tsudzuki T."/>
            <person name="Sugiura M."/>
        </authorList>
    </citation>
    <scope>NUCLEOTIDE SEQUENCE [LARGE SCALE GENOMIC DNA]</scope>
</reference>
<geneLocation type="chloroplast"/>
<sequence length="353" mass="38951">MTAILERRESESLWGRFCNWITSTENRLYIGWFGVLMIPTLLTATSVFIIAFIAAPPVDIDGIREPVSGSLLYGNNIISGAIIPTSAAIGLHFYPIWEAASVDEWLYNGGPYELIVLHFLLGVACYMGREWELSFRLGMRPWIAVAYSAPVAAATAVFLIYPIGQGSFSDGMPLGISGTFNFMIVFQAEHNILMHPFHMLGVAGVFGGSLFSAMHGSLVTSSLIRETTENESANEGYRFGQEEETYNIVAAHGYFGRLIFQYASFNNSRSLHFFLAAWPVVGIWFTALGISTMAFNLNGFNFNQSVVDSQGRVINTWADIINRANLGMEVMHERNAHNFPLDLAAIEAPSTNG</sequence>
<gene>
    <name evidence="1" type="primary">psbA</name>
</gene>
<organism>
    <name type="scientific">Nicotiana tomentosiformis</name>
    <name type="common">Tobacco</name>
    <dbReference type="NCBI Taxonomy" id="4098"/>
    <lineage>
        <taxon>Eukaryota</taxon>
        <taxon>Viridiplantae</taxon>
        <taxon>Streptophyta</taxon>
        <taxon>Embryophyta</taxon>
        <taxon>Tracheophyta</taxon>
        <taxon>Spermatophyta</taxon>
        <taxon>Magnoliopsida</taxon>
        <taxon>eudicotyledons</taxon>
        <taxon>Gunneridae</taxon>
        <taxon>Pentapetalae</taxon>
        <taxon>asterids</taxon>
        <taxon>lamiids</taxon>
        <taxon>Solanales</taxon>
        <taxon>Solanaceae</taxon>
        <taxon>Nicotianoideae</taxon>
        <taxon>Nicotianeae</taxon>
        <taxon>Nicotiana</taxon>
    </lineage>
</organism>
<evidence type="ECO:0000255" key="1">
    <source>
        <dbReference type="HAMAP-Rule" id="MF_01379"/>
    </source>
</evidence>
<dbReference type="EC" id="1.10.3.9" evidence="1"/>
<dbReference type="EMBL" id="AB240139">
    <property type="protein sequence ID" value="BAE47976.1"/>
    <property type="molecule type" value="Genomic_DNA"/>
</dbReference>
<dbReference type="RefSeq" id="YP_398838.1">
    <property type="nucleotide sequence ID" value="NC_007602.1"/>
</dbReference>
<dbReference type="SMR" id="Q33C59"/>
<dbReference type="GeneID" id="3776367"/>
<dbReference type="KEGG" id="nto:3776367"/>
<dbReference type="OrthoDB" id="143at2759"/>
<dbReference type="GO" id="GO:0009535">
    <property type="term" value="C:chloroplast thylakoid membrane"/>
    <property type="evidence" value="ECO:0007669"/>
    <property type="project" value="UniProtKB-SubCell"/>
</dbReference>
<dbReference type="GO" id="GO:0009523">
    <property type="term" value="C:photosystem II"/>
    <property type="evidence" value="ECO:0007669"/>
    <property type="project" value="UniProtKB-KW"/>
</dbReference>
<dbReference type="GO" id="GO:0016168">
    <property type="term" value="F:chlorophyll binding"/>
    <property type="evidence" value="ECO:0007669"/>
    <property type="project" value="UniProtKB-UniRule"/>
</dbReference>
<dbReference type="GO" id="GO:0045156">
    <property type="term" value="F:electron transporter, transferring electrons within the cyclic electron transport pathway of photosynthesis activity"/>
    <property type="evidence" value="ECO:0007669"/>
    <property type="project" value="InterPro"/>
</dbReference>
<dbReference type="GO" id="GO:0005506">
    <property type="term" value="F:iron ion binding"/>
    <property type="evidence" value="ECO:0007669"/>
    <property type="project" value="UniProtKB-UniRule"/>
</dbReference>
<dbReference type="GO" id="GO:0016682">
    <property type="term" value="F:oxidoreductase activity, acting on diphenols and related substances as donors, oxygen as acceptor"/>
    <property type="evidence" value="ECO:0007669"/>
    <property type="project" value="UniProtKB-UniRule"/>
</dbReference>
<dbReference type="GO" id="GO:0010242">
    <property type="term" value="F:oxygen evolving activity"/>
    <property type="evidence" value="ECO:0007669"/>
    <property type="project" value="UniProtKB-EC"/>
</dbReference>
<dbReference type="GO" id="GO:0009772">
    <property type="term" value="P:photosynthetic electron transport in photosystem II"/>
    <property type="evidence" value="ECO:0007669"/>
    <property type="project" value="InterPro"/>
</dbReference>
<dbReference type="GO" id="GO:0009635">
    <property type="term" value="P:response to herbicide"/>
    <property type="evidence" value="ECO:0007669"/>
    <property type="project" value="UniProtKB-KW"/>
</dbReference>
<dbReference type="CDD" id="cd09289">
    <property type="entry name" value="Photosystem-II_D1"/>
    <property type="match status" value="1"/>
</dbReference>
<dbReference type="FunFam" id="1.20.85.10:FF:000002">
    <property type="entry name" value="Photosystem II protein D1"/>
    <property type="match status" value="1"/>
</dbReference>
<dbReference type="Gene3D" id="1.20.85.10">
    <property type="entry name" value="Photosystem II protein D1-like"/>
    <property type="match status" value="1"/>
</dbReference>
<dbReference type="HAMAP" id="MF_01379">
    <property type="entry name" value="PSII_PsbA_D1"/>
    <property type="match status" value="1"/>
</dbReference>
<dbReference type="InterPro" id="IPR055266">
    <property type="entry name" value="D1/D2"/>
</dbReference>
<dbReference type="InterPro" id="IPR036854">
    <property type="entry name" value="Photo_II_D1/D2_sf"/>
</dbReference>
<dbReference type="InterPro" id="IPR000484">
    <property type="entry name" value="Photo_RC_L/M"/>
</dbReference>
<dbReference type="InterPro" id="IPR055265">
    <property type="entry name" value="Photo_RC_L/M_CS"/>
</dbReference>
<dbReference type="InterPro" id="IPR005867">
    <property type="entry name" value="PSII_D1"/>
</dbReference>
<dbReference type="NCBIfam" id="TIGR01151">
    <property type="entry name" value="psbA"/>
    <property type="match status" value="1"/>
</dbReference>
<dbReference type="PANTHER" id="PTHR33149:SF12">
    <property type="entry name" value="PHOTOSYSTEM II D2 PROTEIN"/>
    <property type="match status" value="1"/>
</dbReference>
<dbReference type="PANTHER" id="PTHR33149">
    <property type="entry name" value="PHOTOSYSTEM II PROTEIN D1"/>
    <property type="match status" value="1"/>
</dbReference>
<dbReference type="Pfam" id="PF00124">
    <property type="entry name" value="Photo_RC"/>
    <property type="match status" value="1"/>
</dbReference>
<dbReference type="PRINTS" id="PR00256">
    <property type="entry name" value="REACTNCENTRE"/>
</dbReference>
<dbReference type="SUPFAM" id="SSF81483">
    <property type="entry name" value="Bacterial photosystem II reaction centre, L and M subunits"/>
    <property type="match status" value="1"/>
</dbReference>
<dbReference type="PROSITE" id="PS00244">
    <property type="entry name" value="REACTION_CENTER"/>
    <property type="match status" value="1"/>
</dbReference>
<keyword id="KW-0007">Acetylation</keyword>
<keyword id="KW-0106">Calcium</keyword>
<keyword id="KW-0148">Chlorophyll</keyword>
<keyword id="KW-0150">Chloroplast</keyword>
<keyword id="KW-0157">Chromophore</keyword>
<keyword id="KW-0249">Electron transport</keyword>
<keyword id="KW-0359">Herbicide resistance</keyword>
<keyword id="KW-0408">Iron</keyword>
<keyword id="KW-0460">Magnesium</keyword>
<keyword id="KW-0464">Manganese</keyword>
<keyword id="KW-0472">Membrane</keyword>
<keyword id="KW-0479">Metal-binding</keyword>
<keyword id="KW-0560">Oxidoreductase</keyword>
<keyword id="KW-0597">Phosphoprotein</keyword>
<keyword id="KW-0602">Photosynthesis</keyword>
<keyword id="KW-0604">Photosystem II</keyword>
<keyword id="KW-0934">Plastid</keyword>
<keyword id="KW-0793">Thylakoid</keyword>
<keyword id="KW-0812">Transmembrane</keyword>
<keyword id="KW-1133">Transmembrane helix</keyword>
<keyword id="KW-0813">Transport</keyword>
<protein>
    <recommendedName>
        <fullName evidence="1">Photosystem II protein D1</fullName>
        <shortName evidence="1">PSII D1 protein</shortName>
        <ecNumber evidence="1">1.10.3.9</ecNumber>
    </recommendedName>
    <alternativeName>
        <fullName evidence="1">Photosystem II Q(B) protein</fullName>
    </alternativeName>
</protein>
<feature type="initiator methionine" description="Removed" evidence="1">
    <location>
        <position position="1"/>
    </location>
</feature>
<feature type="chain" id="PRO_0000340028" description="Photosystem II protein D1" evidence="1">
    <location>
        <begin position="2"/>
        <end position="344"/>
    </location>
</feature>
<feature type="propeptide" id="PRO_0000340029" evidence="1">
    <location>
        <begin position="345"/>
        <end position="353"/>
    </location>
</feature>
<feature type="transmembrane region" description="Helical" evidence="1">
    <location>
        <begin position="29"/>
        <end position="46"/>
    </location>
</feature>
<feature type="transmembrane region" description="Helical" evidence="1">
    <location>
        <begin position="118"/>
        <end position="133"/>
    </location>
</feature>
<feature type="transmembrane region" description="Helical" evidence="1">
    <location>
        <begin position="142"/>
        <end position="156"/>
    </location>
</feature>
<feature type="transmembrane region" description="Helical" evidence="1">
    <location>
        <begin position="197"/>
        <end position="218"/>
    </location>
</feature>
<feature type="transmembrane region" description="Helical" evidence="1">
    <location>
        <begin position="274"/>
        <end position="288"/>
    </location>
</feature>
<feature type="binding site" description="axial binding residue" evidence="1">
    <location>
        <position position="118"/>
    </location>
    <ligand>
        <name>chlorophyll a</name>
        <dbReference type="ChEBI" id="CHEBI:58416"/>
        <label>ChlzD1</label>
    </ligand>
    <ligandPart>
        <name>Mg</name>
        <dbReference type="ChEBI" id="CHEBI:25107"/>
    </ligandPart>
</feature>
<feature type="binding site" evidence="1">
    <location>
        <position position="126"/>
    </location>
    <ligand>
        <name>pheophytin a</name>
        <dbReference type="ChEBI" id="CHEBI:136840"/>
        <label>D1</label>
    </ligand>
</feature>
<feature type="binding site" evidence="1">
    <location>
        <position position="170"/>
    </location>
    <ligand>
        <name>[CaMn4O5] cluster</name>
        <dbReference type="ChEBI" id="CHEBI:189552"/>
    </ligand>
</feature>
<feature type="binding site" evidence="1">
    <location>
        <position position="189"/>
    </location>
    <ligand>
        <name>[CaMn4O5] cluster</name>
        <dbReference type="ChEBI" id="CHEBI:189552"/>
    </ligand>
</feature>
<feature type="binding site" description="axial binding residue" evidence="1">
    <location>
        <position position="198"/>
    </location>
    <ligand>
        <name>chlorophyll a</name>
        <dbReference type="ChEBI" id="CHEBI:58416"/>
        <label>PD1</label>
    </ligand>
    <ligandPart>
        <name>Mg</name>
        <dbReference type="ChEBI" id="CHEBI:25107"/>
    </ligandPart>
</feature>
<feature type="binding site" evidence="1">
    <location>
        <position position="215"/>
    </location>
    <ligand>
        <name>a quinone</name>
        <dbReference type="ChEBI" id="CHEBI:132124"/>
        <label>B</label>
    </ligand>
</feature>
<feature type="binding site" evidence="1">
    <location>
        <position position="215"/>
    </location>
    <ligand>
        <name>Fe cation</name>
        <dbReference type="ChEBI" id="CHEBI:24875"/>
        <note>ligand shared with heterodimeric partner</note>
    </ligand>
</feature>
<feature type="binding site" evidence="1">
    <location>
        <begin position="264"/>
        <end position="265"/>
    </location>
    <ligand>
        <name>a quinone</name>
        <dbReference type="ChEBI" id="CHEBI:132124"/>
        <label>B</label>
    </ligand>
</feature>
<feature type="binding site" evidence="1">
    <location>
        <position position="272"/>
    </location>
    <ligand>
        <name>Fe cation</name>
        <dbReference type="ChEBI" id="CHEBI:24875"/>
        <note>ligand shared with heterodimeric partner</note>
    </ligand>
</feature>
<feature type="binding site" evidence="1">
    <location>
        <position position="332"/>
    </location>
    <ligand>
        <name>[CaMn4O5] cluster</name>
        <dbReference type="ChEBI" id="CHEBI:189552"/>
    </ligand>
</feature>
<feature type="binding site" evidence="1">
    <location>
        <position position="333"/>
    </location>
    <ligand>
        <name>[CaMn4O5] cluster</name>
        <dbReference type="ChEBI" id="CHEBI:189552"/>
    </ligand>
</feature>
<feature type="binding site" evidence="1">
    <location>
        <position position="342"/>
    </location>
    <ligand>
        <name>[CaMn4O5] cluster</name>
        <dbReference type="ChEBI" id="CHEBI:189552"/>
    </ligand>
</feature>
<feature type="binding site" evidence="1">
    <location>
        <position position="344"/>
    </location>
    <ligand>
        <name>[CaMn4O5] cluster</name>
        <dbReference type="ChEBI" id="CHEBI:189552"/>
    </ligand>
</feature>
<feature type="site" description="Tyrosine radical intermediate" evidence="1">
    <location>
        <position position="161"/>
    </location>
</feature>
<feature type="site" description="Stabilizes free radical intermediate" evidence="1">
    <location>
        <position position="190"/>
    </location>
</feature>
<feature type="site" description="Cleavage; by CTPA" evidence="1">
    <location>
        <begin position="344"/>
        <end position="345"/>
    </location>
</feature>
<feature type="modified residue" description="N-acetylthreonine" evidence="1">
    <location>
        <position position="2"/>
    </location>
</feature>
<feature type="modified residue" description="Phosphothreonine" evidence="1">
    <location>
        <position position="2"/>
    </location>
</feature>
<proteinExistence type="inferred from homology"/>